<name>Y1376_NATTJ</name>
<comment type="similarity">
    <text evidence="1">Belongs to the UPF0102 family.</text>
</comment>
<protein>
    <recommendedName>
        <fullName evidence="1">UPF0102 protein Nther_1376</fullName>
    </recommendedName>
</protein>
<gene>
    <name type="ordered locus">Nther_1376</name>
</gene>
<keyword id="KW-1185">Reference proteome</keyword>
<sequence>MNNKSKGRTAEKIARIFLLSKGYQIIFQNYRFSRLGEIDLICCFDNILIFVEVKSRSSLLWGQPEEAVGYEKQGQLKKLANIFLYEFNEFTEYQIRFDVIAILNNNKVKCEISHLRDAF</sequence>
<proteinExistence type="inferred from homology"/>
<accession>B2A2P1</accession>
<feature type="chain" id="PRO_1000091250" description="UPF0102 protein Nther_1376">
    <location>
        <begin position="1"/>
        <end position="119"/>
    </location>
</feature>
<reference key="1">
    <citation type="submission" date="2008-04" db="EMBL/GenBank/DDBJ databases">
        <title>Complete sequence of chromosome of Natranaerobius thermophilus JW/NM-WN-LF.</title>
        <authorList>
            <consortium name="US DOE Joint Genome Institute"/>
            <person name="Copeland A."/>
            <person name="Lucas S."/>
            <person name="Lapidus A."/>
            <person name="Glavina del Rio T."/>
            <person name="Dalin E."/>
            <person name="Tice H."/>
            <person name="Bruce D."/>
            <person name="Goodwin L."/>
            <person name="Pitluck S."/>
            <person name="Chertkov O."/>
            <person name="Brettin T."/>
            <person name="Detter J.C."/>
            <person name="Han C."/>
            <person name="Kuske C.R."/>
            <person name="Schmutz J."/>
            <person name="Larimer F."/>
            <person name="Land M."/>
            <person name="Hauser L."/>
            <person name="Kyrpides N."/>
            <person name="Lykidis A."/>
            <person name="Mesbah N.M."/>
            <person name="Wiegel J."/>
        </authorList>
    </citation>
    <scope>NUCLEOTIDE SEQUENCE [LARGE SCALE GENOMIC DNA]</scope>
    <source>
        <strain>ATCC BAA-1301 / DSM 18059 / JW/NM-WN-LF</strain>
    </source>
</reference>
<evidence type="ECO:0000255" key="1">
    <source>
        <dbReference type="HAMAP-Rule" id="MF_00048"/>
    </source>
</evidence>
<organism>
    <name type="scientific">Natranaerobius thermophilus (strain ATCC BAA-1301 / DSM 18059 / JW/NM-WN-LF)</name>
    <dbReference type="NCBI Taxonomy" id="457570"/>
    <lineage>
        <taxon>Bacteria</taxon>
        <taxon>Bacillati</taxon>
        <taxon>Bacillota</taxon>
        <taxon>Clostridia</taxon>
        <taxon>Natranaerobiales</taxon>
        <taxon>Natranaerobiaceae</taxon>
        <taxon>Natranaerobius</taxon>
    </lineage>
</organism>
<dbReference type="EMBL" id="CP001034">
    <property type="protein sequence ID" value="ACB84959.1"/>
    <property type="molecule type" value="Genomic_DNA"/>
</dbReference>
<dbReference type="RefSeq" id="WP_012447834.1">
    <property type="nucleotide sequence ID" value="NC_010718.1"/>
</dbReference>
<dbReference type="SMR" id="B2A2P1"/>
<dbReference type="STRING" id="457570.Nther_1376"/>
<dbReference type="KEGG" id="nth:Nther_1376"/>
<dbReference type="eggNOG" id="COG0792">
    <property type="taxonomic scope" value="Bacteria"/>
</dbReference>
<dbReference type="HOGENOM" id="CLU_115353_1_1_9"/>
<dbReference type="InParanoid" id="B2A2P1"/>
<dbReference type="OrthoDB" id="9802516at2"/>
<dbReference type="Proteomes" id="UP000001683">
    <property type="component" value="Chromosome"/>
</dbReference>
<dbReference type="GO" id="GO:0003676">
    <property type="term" value="F:nucleic acid binding"/>
    <property type="evidence" value="ECO:0007669"/>
    <property type="project" value="InterPro"/>
</dbReference>
<dbReference type="CDD" id="cd20736">
    <property type="entry name" value="PoNe_Nuclease"/>
    <property type="match status" value="1"/>
</dbReference>
<dbReference type="Gene3D" id="3.40.1350.10">
    <property type="match status" value="1"/>
</dbReference>
<dbReference type="HAMAP" id="MF_00048">
    <property type="entry name" value="UPF0102"/>
    <property type="match status" value="1"/>
</dbReference>
<dbReference type="InterPro" id="IPR011335">
    <property type="entry name" value="Restrct_endonuc-II-like"/>
</dbReference>
<dbReference type="InterPro" id="IPR011856">
    <property type="entry name" value="tRNA_endonuc-like_dom_sf"/>
</dbReference>
<dbReference type="InterPro" id="IPR003509">
    <property type="entry name" value="UPF0102_YraN-like"/>
</dbReference>
<dbReference type="NCBIfam" id="NF009150">
    <property type="entry name" value="PRK12497.1-3"/>
    <property type="match status" value="1"/>
</dbReference>
<dbReference type="NCBIfam" id="TIGR00252">
    <property type="entry name" value="YraN family protein"/>
    <property type="match status" value="1"/>
</dbReference>
<dbReference type="PANTHER" id="PTHR34039">
    <property type="entry name" value="UPF0102 PROTEIN YRAN"/>
    <property type="match status" value="1"/>
</dbReference>
<dbReference type="PANTHER" id="PTHR34039:SF1">
    <property type="entry name" value="UPF0102 PROTEIN YRAN"/>
    <property type="match status" value="1"/>
</dbReference>
<dbReference type="Pfam" id="PF02021">
    <property type="entry name" value="UPF0102"/>
    <property type="match status" value="1"/>
</dbReference>
<dbReference type="SUPFAM" id="SSF52980">
    <property type="entry name" value="Restriction endonuclease-like"/>
    <property type="match status" value="1"/>
</dbReference>